<organism>
    <name type="scientific">Granulibacter bethesdensis (strain ATCC BAA-1260 / CGDNIH1)</name>
    <dbReference type="NCBI Taxonomy" id="391165"/>
    <lineage>
        <taxon>Bacteria</taxon>
        <taxon>Pseudomonadati</taxon>
        <taxon>Pseudomonadota</taxon>
        <taxon>Alphaproteobacteria</taxon>
        <taxon>Acetobacterales</taxon>
        <taxon>Acetobacteraceae</taxon>
        <taxon>Granulibacter</taxon>
    </lineage>
</organism>
<keyword id="KW-0030">Aminoacyl-tRNA synthetase</keyword>
<keyword id="KW-0067">ATP-binding</keyword>
<keyword id="KW-0175">Coiled coil</keyword>
<keyword id="KW-0963">Cytoplasm</keyword>
<keyword id="KW-0436">Ligase</keyword>
<keyword id="KW-0547">Nucleotide-binding</keyword>
<keyword id="KW-0648">Protein biosynthesis</keyword>
<keyword id="KW-1185">Reference proteome</keyword>
<name>SYV_GRABC</name>
<reference key="1">
    <citation type="journal article" date="2007" name="J. Bacteriol.">
        <title>Genome sequence analysis of the emerging human pathogenic acetic acid bacterium Granulibacter bethesdensis.</title>
        <authorList>
            <person name="Greenberg D.E."/>
            <person name="Porcella S.F."/>
            <person name="Zelazny A.M."/>
            <person name="Virtaneva K."/>
            <person name="Sturdevant D.E."/>
            <person name="Kupko J.J. III"/>
            <person name="Barbian K.D."/>
            <person name="Babar A."/>
            <person name="Dorward D.W."/>
            <person name="Holland S.M."/>
        </authorList>
    </citation>
    <scope>NUCLEOTIDE SEQUENCE [LARGE SCALE GENOMIC DNA]</scope>
    <source>
        <strain>ATCC BAA-1260 / CGDNIH1</strain>
    </source>
</reference>
<dbReference type="EC" id="6.1.1.9" evidence="1"/>
<dbReference type="EMBL" id="CP000394">
    <property type="protein sequence ID" value="ABI61831.1"/>
    <property type="molecule type" value="Genomic_DNA"/>
</dbReference>
<dbReference type="SMR" id="Q0BTM1"/>
<dbReference type="STRING" id="391165.GbCGDNIH1_0933"/>
<dbReference type="KEGG" id="gbe:GbCGDNIH1_0933"/>
<dbReference type="eggNOG" id="COG0525">
    <property type="taxonomic scope" value="Bacteria"/>
</dbReference>
<dbReference type="HOGENOM" id="CLU_001493_0_2_5"/>
<dbReference type="Proteomes" id="UP000001963">
    <property type="component" value="Chromosome"/>
</dbReference>
<dbReference type="GO" id="GO:0005829">
    <property type="term" value="C:cytosol"/>
    <property type="evidence" value="ECO:0007669"/>
    <property type="project" value="TreeGrafter"/>
</dbReference>
<dbReference type="GO" id="GO:0002161">
    <property type="term" value="F:aminoacyl-tRNA deacylase activity"/>
    <property type="evidence" value="ECO:0007669"/>
    <property type="project" value="InterPro"/>
</dbReference>
<dbReference type="GO" id="GO:0005524">
    <property type="term" value="F:ATP binding"/>
    <property type="evidence" value="ECO:0007669"/>
    <property type="project" value="UniProtKB-UniRule"/>
</dbReference>
<dbReference type="GO" id="GO:0004832">
    <property type="term" value="F:valine-tRNA ligase activity"/>
    <property type="evidence" value="ECO:0007669"/>
    <property type="project" value="UniProtKB-UniRule"/>
</dbReference>
<dbReference type="GO" id="GO:0006438">
    <property type="term" value="P:valyl-tRNA aminoacylation"/>
    <property type="evidence" value="ECO:0007669"/>
    <property type="project" value="UniProtKB-UniRule"/>
</dbReference>
<dbReference type="CDD" id="cd07962">
    <property type="entry name" value="Anticodon_Ia_Val"/>
    <property type="match status" value="1"/>
</dbReference>
<dbReference type="CDD" id="cd00817">
    <property type="entry name" value="ValRS_core"/>
    <property type="match status" value="1"/>
</dbReference>
<dbReference type="FunFam" id="1.10.287.380:FF:000001">
    <property type="entry name" value="Valine--tRNA ligase"/>
    <property type="match status" value="1"/>
</dbReference>
<dbReference type="FunFam" id="3.40.50.620:FF:000032">
    <property type="entry name" value="Valine--tRNA ligase"/>
    <property type="match status" value="1"/>
</dbReference>
<dbReference type="FunFam" id="3.40.50.620:FF:000098">
    <property type="entry name" value="Valine--tRNA ligase"/>
    <property type="match status" value="1"/>
</dbReference>
<dbReference type="FunFam" id="3.90.740.10:FF:000008">
    <property type="entry name" value="Valine--tRNA ligase, mitochondrial"/>
    <property type="match status" value="1"/>
</dbReference>
<dbReference type="Gene3D" id="3.40.50.620">
    <property type="entry name" value="HUPs"/>
    <property type="match status" value="2"/>
</dbReference>
<dbReference type="Gene3D" id="1.10.730.10">
    <property type="entry name" value="Isoleucyl-tRNA Synthetase, Domain 1"/>
    <property type="match status" value="1"/>
</dbReference>
<dbReference type="Gene3D" id="1.10.287.380">
    <property type="entry name" value="Valyl-tRNA synthetase, C-terminal domain"/>
    <property type="match status" value="1"/>
</dbReference>
<dbReference type="Gene3D" id="3.90.740.10">
    <property type="entry name" value="Valyl/Leucyl/Isoleucyl-tRNA synthetase, editing domain"/>
    <property type="match status" value="1"/>
</dbReference>
<dbReference type="HAMAP" id="MF_02004">
    <property type="entry name" value="Val_tRNA_synth_type1"/>
    <property type="match status" value="1"/>
</dbReference>
<dbReference type="InterPro" id="IPR001412">
    <property type="entry name" value="aa-tRNA-synth_I_CS"/>
</dbReference>
<dbReference type="InterPro" id="IPR002300">
    <property type="entry name" value="aa-tRNA-synth_Ia"/>
</dbReference>
<dbReference type="InterPro" id="IPR033705">
    <property type="entry name" value="Anticodon_Ia_Val"/>
</dbReference>
<dbReference type="InterPro" id="IPR013155">
    <property type="entry name" value="M/V/L/I-tRNA-synth_anticd-bd"/>
</dbReference>
<dbReference type="InterPro" id="IPR014729">
    <property type="entry name" value="Rossmann-like_a/b/a_fold"/>
</dbReference>
<dbReference type="InterPro" id="IPR010978">
    <property type="entry name" value="tRNA-bd_arm"/>
</dbReference>
<dbReference type="InterPro" id="IPR009080">
    <property type="entry name" value="tRNAsynth_Ia_anticodon-bd"/>
</dbReference>
<dbReference type="InterPro" id="IPR037118">
    <property type="entry name" value="Val-tRNA_synth_C_sf"/>
</dbReference>
<dbReference type="InterPro" id="IPR019499">
    <property type="entry name" value="Val-tRNA_synth_tRNA-bd"/>
</dbReference>
<dbReference type="InterPro" id="IPR009008">
    <property type="entry name" value="Val/Leu/Ile-tRNA-synth_edit"/>
</dbReference>
<dbReference type="InterPro" id="IPR002303">
    <property type="entry name" value="Valyl-tRNA_ligase"/>
</dbReference>
<dbReference type="NCBIfam" id="NF004349">
    <property type="entry name" value="PRK05729.1"/>
    <property type="match status" value="1"/>
</dbReference>
<dbReference type="NCBIfam" id="TIGR00422">
    <property type="entry name" value="valS"/>
    <property type="match status" value="1"/>
</dbReference>
<dbReference type="PANTHER" id="PTHR11946:SF93">
    <property type="entry name" value="VALINE--TRNA LIGASE, CHLOROPLASTIC_MITOCHONDRIAL 2"/>
    <property type="match status" value="1"/>
</dbReference>
<dbReference type="PANTHER" id="PTHR11946">
    <property type="entry name" value="VALYL-TRNA SYNTHETASES"/>
    <property type="match status" value="1"/>
</dbReference>
<dbReference type="Pfam" id="PF08264">
    <property type="entry name" value="Anticodon_1"/>
    <property type="match status" value="1"/>
</dbReference>
<dbReference type="Pfam" id="PF00133">
    <property type="entry name" value="tRNA-synt_1"/>
    <property type="match status" value="1"/>
</dbReference>
<dbReference type="Pfam" id="PF10458">
    <property type="entry name" value="Val_tRNA-synt_C"/>
    <property type="match status" value="1"/>
</dbReference>
<dbReference type="PRINTS" id="PR00986">
    <property type="entry name" value="TRNASYNTHVAL"/>
</dbReference>
<dbReference type="SUPFAM" id="SSF47323">
    <property type="entry name" value="Anticodon-binding domain of a subclass of class I aminoacyl-tRNA synthetases"/>
    <property type="match status" value="1"/>
</dbReference>
<dbReference type="SUPFAM" id="SSF52374">
    <property type="entry name" value="Nucleotidylyl transferase"/>
    <property type="match status" value="1"/>
</dbReference>
<dbReference type="SUPFAM" id="SSF46589">
    <property type="entry name" value="tRNA-binding arm"/>
    <property type="match status" value="1"/>
</dbReference>
<dbReference type="SUPFAM" id="SSF50677">
    <property type="entry name" value="ValRS/IleRS/LeuRS editing domain"/>
    <property type="match status" value="1"/>
</dbReference>
<dbReference type="PROSITE" id="PS00178">
    <property type="entry name" value="AA_TRNA_LIGASE_I"/>
    <property type="match status" value="1"/>
</dbReference>
<feature type="chain" id="PRO_1000088562" description="Valine--tRNA ligase">
    <location>
        <begin position="1"/>
        <end position="896"/>
    </location>
</feature>
<feature type="coiled-coil region" evidence="1">
    <location>
        <begin position="830"/>
        <end position="896"/>
    </location>
</feature>
<feature type="short sequence motif" description="'HIGH' region">
    <location>
        <begin position="48"/>
        <end position="58"/>
    </location>
</feature>
<feature type="short sequence motif" description="'KMSKS' region">
    <location>
        <begin position="543"/>
        <end position="547"/>
    </location>
</feature>
<feature type="binding site" evidence="1">
    <location>
        <position position="546"/>
    </location>
    <ligand>
        <name>ATP</name>
        <dbReference type="ChEBI" id="CHEBI:30616"/>
    </ligand>
</feature>
<accession>Q0BTM1</accession>
<gene>
    <name evidence="1" type="primary">valS</name>
    <name type="ordered locus">GbCGDNIH1_0933</name>
</gene>
<protein>
    <recommendedName>
        <fullName evidence="1">Valine--tRNA ligase</fullName>
        <ecNumber evidence="1">6.1.1.9</ecNumber>
    </recommendedName>
    <alternativeName>
        <fullName evidence="1">Valyl-tRNA synthetase</fullName>
        <shortName evidence="1">ValRS</shortName>
    </alternativeName>
</protein>
<sequence>MYERAMLSKNFDHAANEQRIYAGWEHGGAFAANPASSATPFTIMIPPPNVTGSLHMGHALTFTLQDSLVRWRRMQGRDVLWQPGTDHAGIATQMVVERLLASEGSPGRREIGRDAFLDRVWRWKAESGGNITHQLRRLGASLDWGRERFTMDEGLSAAVRDVFVTLYRQGLIYRDRRLVNWDPQLQTAISDLEVESREVRGNLWHIRYPLEDGEGSIIVATTRPETMLGDSAVAVHPEDERYTALIGKCVILPLTGRRIPIVADTYSDPEKGTGAVKITPAHDFNDFAVGRRHDLPMPSIMDREGRITLAEITCTEATDIADPAFVTGLEGQERFAARKAIVARLEEMGFLETIETHTHHVPHGDRSGVPIEPLLTTQWFCNAAELAKPAVAAVESGDTRFVPKQWENTFFAWLRDIQPWCISRQLWWGHRIPAWYAPDGSVYVAATAEEAQAAYGGSETLTQDEDVLDTWFSSALWPFSTLGWPEDDSILSRYYPTDVLITGFDIIFFWVARMMMMGLHIQKQVPFRDVYIHGLVRDERGQKMSKSKGNVIDPLALIEAHGADPMRFAICLLAGPGRDIKLGPKRVEDASRFVTKLWNASVFCERNGVKPEPGFDPATVTLPLSRWILASADDAIRAATQALEAYRFDDYAATCYRFVWNTFCDWFVELAKPILLATDTPEAAEIKAVAAHVLGVVLRLLHPAMPYVTETLWDHFGYGPEFSLIRAPWPEVGVSDPAREAARQEIDWLVRLIGEVRTVRNEMNVPPSTLTPILLKDAVAETVARAERWRDQIARLARASSVTSLEGALPKGSAQAVLDEAILVIPLEGVIDLDAERTRLTRERDKARDEAAKVVRKLENADFVARAKPEVVEENRDRLAALEADIARLGAALERL</sequence>
<proteinExistence type="inferred from homology"/>
<evidence type="ECO:0000255" key="1">
    <source>
        <dbReference type="HAMAP-Rule" id="MF_02004"/>
    </source>
</evidence>
<comment type="function">
    <text evidence="1">Catalyzes the attachment of valine to tRNA(Val). As ValRS can inadvertently accommodate and process structurally similar amino acids such as threonine, to avoid such errors, it has a 'posttransfer' editing activity that hydrolyzes mischarged Thr-tRNA(Val) in a tRNA-dependent manner.</text>
</comment>
<comment type="catalytic activity">
    <reaction evidence="1">
        <text>tRNA(Val) + L-valine + ATP = L-valyl-tRNA(Val) + AMP + diphosphate</text>
        <dbReference type="Rhea" id="RHEA:10704"/>
        <dbReference type="Rhea" id="RHEA-COMP:9672"/>
        <dbReference type="Rhea" id="RHEA-COMP:9708"/>
        <dbReference type="ChEBI" id="CHEBI:30616"/>
        <dbReference type="ChEBI" id="CHEBI:33019"/>
        <dbReference type="ChEBI" id="CHEBI:57762"/>
        <dbReference type="ChEBI" id="CHEBI:78442"/>
        <dbReference type="ChEBI" id="CHEBI:78537"/>
        <dbReference type="ChEBI" id="CHEBI:456215"/>
        <dbReference type="EC" id="6.1.1.9"/>
    </reaction>
</comment>
<comment type="subunit">
    <text evidence="1">Monomer.</text>
</comment>
<comment type="subcellular location">
    <subcellularLocation>
        <location evidence="1">Cytoplasm</location>
    </subcellularLocation>
</comment>
<comment type="domain">
    <text evidence="1">ValRS has two distinct active sites: one for aminoacylation and one for editing. The misactivated threonine is translocated from the active site to the editing site.</text>
</comment>
<comment type="domain">
    <text evidence="1">The C-terminal coiled-coil domain is crucial for aminoacylation activity.</text>
</comment>
<comment type="similarity">
    <text evidence="1">Belongs to the class-I aminoacyl-tRNA synthetase family. ValS type 1 subfamily.</text>
</comment>